<proteinExistence type="inferred from homology"/>
<accession>B9WJA2</accession>
<organism>
    <name type="scientific">Candida dubliniensis (strain CD36 / ATCC MYA-646 / CBS 7987 / NCPF 3949 / NRRL Y-17841)</name>
    <name type="common">Yeast</name>
    <dbReference type="NCBI Taxonomy" id="573826"/>
    <lineage>
        <taxon>Eukaryota</taxon>
        <taxon>Fungi</taxon>
        <taxon>Dikarya</taxon>
        <taxon>Ascomycota</taxon>
        <taxon>Saccharomycotina</taxon>
        <taxon>Pichiomycetes</taxon>
        <taxon>Debaryomycetaceae</taxon>
        <taxon>Candida/Lodderomyces clade</taxon>
        <taxon>Candida</taxon>
    </lineage>
</organism>
<comment type="function">
    <text evidence="1">Cotranslationally removes the N-terminal methionine from nascent proteins. The N-terminal methionine is often cleaved when the second residue in the primary sequence is small and uncharged (Met-Ala-, Cys, Gly, Pro, Ser, Thr, or Val).</text>
</comment>
<comment type="catalytic activity">
    <reaction evidence="1">
        <text>Release of N-terminal amino acids, preferentially methionine, from peptides and arylamides.</text>
        <dbReference type="EC" id="3.4.11.18"/>
    </reaction>
</comment>
<comment type="cofactor">
    <cofactor evidence="1">
        <name>Co(2+)</name>
        <dbReference type="ChEBI" id="CHEBI:48828"/>
    </cofactor>
    <cofactor evidence="1">
        <name>Zn(2+)</name>
        <dbReference type="ChEBI" id="CHEBI:29105"/>
    </cofactor>
    <cofactor evidence="1">
        <name>Mn(2+)</name>
        <dbReference type="ChEBI" id="CHEBI:29035"/>
    </cofactor>
    <cofactor evidence="1">
        <name>Fe(2+)</name>
        <dbReference type="ChEBI" id="CHEBI:29033"/>
    </cofactor>
    <text evidence="1">Binds 2 divalent metal cations per subunit. Has a high-affinity and a low affinity metal-binding site. The true nature of the physiological cofactor is under debate. The enzyme is active with cobalt, zinc, manganese or divalent iron ions. Most likely, methionine aminopeptidases function as mononuclear Fe(2+)-metalloproteases under physiological conditions, and the catalytically relevant metal-binding site has been assigned to the histidine-containing high-affinity site.</text>
</comment>
<comment type="subcellular location">
    <subcellularLocation>
        <location evidence="1">Cytoplasm</location>
    </subcellularLocation>
</comment>
<comment type="similarity">
    <text evidence="1">Belongs to the peptidase M24A family. Methionine aminopeptidase eukaryotic type 2 subfamily.</text>
</comment>
<feature type="chain" id="PRO_0000407647" description="Methionine aminopeptidase 2">
    <location>
        <begin position="1"/>
        <end position="452"/>
    </location>
</feature>
<feature type="region of interest" description="Disordered" evidence="2">
    <location>
        <begin position="1"/>
        <end position="91"/>
    </location>
</feature>
<feature type="compositionally biased region" description="Basic and acidic residues" evidence="2">
    <location>
        <begin position="8"/>
        <end position="38"/>
    </location>
</feature>
<feature type="compositionally biased region" description="Acidic residues" evidence="2">
    <location>
        <begin position="39"/>
        <end position="62"/>
    </location>
</feature>
<feature type="compositionally biased region" description="Basic residues" evidence="2">
    <location>
        <begin position="74"/>
        <end position="91"/>
    </location>
</feature>
<feature type="binding site" evidence="1">
    <location>
        <position position="203"/>
    </location>
    <ligand>
        <name>substrate</name>
    </ligand>
</feature>
<feature type="binding site" evidence="1">
    <location>
        <position position="223"/>
    </location>
    <ligand>
        <name>a divalent metal cation</name>
        <dbReference type="ChEBI" id="CHEBI:60240"/>
        <label>1</label>
    </ligand>
</feature>
<feature type="binding site" evidence="1">
    <location>
        <position position="234"/>
    </location>
    <ligand>
        <name>a divalent metal cation</name>
        <dbReference type="ChEBI" id="CHEBI:60240"/>
        <label>1</label>
    </ligand>
</feature>
<feature type="binding site" evidence="1">
    <location>
        <position position="234"/>
    </location>
    <ligand>
        <name>a divalent metal cation</name>
        <dbReference type="ChEBI" id="CHEBI:60240"/>
        <label>2</label>
        <note>catalytic</note>
    </ligand>
</feature>
<feature type="binding site" evidence="1">
    <location>
        <position position="305"/>
    </location>
    <ligand>
        <name>a divalent metal cation</name>
        <dbReference type="ChEBI" id="CHEBI:60240"/>
        <label>2</label>
        <note>catalytic</note>
    </ligand>
</feature>
<feature type="binding site" evidence="1">
    <location>
        <position position="313"/>
    </location>
    <ligand>
        <name>substrate</name>
    </ligand>
</feature>
<feature type="binding site" evidence="1">
    <location>
        <position position="338"/>
    </location>
    <ligand>
        <name>a divalent metal cation</name>
        <dbReference type="ChEBI" id="CHEBI:60240"/>
        <label>2</label>
        <note>catalytic</note>
    </ligand>
</feature>
<feature type="binding site" evidence="1">
    <location>
        <position position="433"/>
    </location>
    <ligand>
        <name>a divalent metal cation</name>
        <dbReference type="ChEBI" id="CHEBI:60240"/>
        <label>1</label>
    </ligand>
</feature>
<feature type="binding site" evidence="1">
    <location>
        <position position="433"/>
    </location>
    <ligand>
        <name>a divalent metal cation</name>
        <dbReference type="ChEBI" id="CHEBI:60240"/>
        <label>2</label>
        <note>catalytic</note>
    </ligand>
</feature>
<keyword id="KW-0031">Aminopeptidase</keyword>
<keyword id="KW-0963">Cytoplasm</keyword>
<keyword id="KW-0378">Hydrolase</keyword>
<keyword id="KW-0479">Metal-binding</keyword>
<keyword id="KW-0645">Protease</keyword>
<reference key="1">
    <citation type="journal article" date="2009" name="Genome Res.">
        <title>Comparative genomics of the fungal pathogens Candida dubliniensis and Candida albicans.</title>
        <authorList>
            <person name="Jackson A.P."/>
            <person name="Gamble J.A."/>
            <person name="Yeomans T."/>
            <person name="Moran G.P."/>
            <person name="Saunders D."/>
            <person name="Harris D."/>
            <person name="Aslett M."/>
            <person name="Barrell J.F."/>
            <person name="Butler G."/>
            <person name="Citiulo F."/>
            <person name="Coleman D.C."/>
            <person name="de Groot P.W.J."/>
            <person name="Goodwin T.J."/>
            <person name="Quail M.A."/>
            <person name="McQuillan J."/>
            <person name="Munro C.A."/>
            <person name="Pain A."/>
            <person name="Poulter R.T."/>
            <person name="Rajandream M.A."/>
            <person name="Renauld H."/>
            <person name="Spiering M.J."/>
            <person name="Tivey A."/>
            <person name="Gow N.A.R."/>
            <person name="Barrell B."/>
            <person name="Sullivan D.J."/>
            <person name="Berriman M."/>
        </authorList>
    </citation>
    <scope>NUCLEOTIDE SEQUENCE [LARGE SCALE GENOMIC DNA]</scope>
    <source>
        <strain>CD36 / ATCC MYA-646 / CBS 7987 / NCPF 3949 / NRRL Y-17841</strain>
    </source>
</reference>
<gene>
    <name evidence="1" type="primary">MAP2</name>
    <name type="ORF">CD36_64570</name>
</gene>
<dbReference type="EC" id="3.4.11.18" evidence="1"/>
<dbReference type="EMBL" id="FM992693">
    <property type="protein sequence ID" value="CAX41324.1"/>
    <property type="molecule type" value="Genomic_DNA"/>
</dbReference>
<dbReference type="RefSeq" id="XP_002421164.1">
    <property type="nucleotide sequence ID" value="XM_002421119.1"/>
</dbReference>
<dbReference type="SMR" id="B9WJA2"/>
<dbReference type="MEROPS" id="M24.002"/>
<dbReference type="GeneID" id="8048936"/>
<dbReference type="KEGG" id="cdu:CD36_64570"/>
<dbReference type="CGD" id="CAL0000171001">
    <property type="gene designation" value="Cd36_64570"/>
</dbReference>
<dbReference type="VEuPathDB" id="FungiDB:CD36_64570"/>
<dbReference type="eggNOG" id="KOG2775">
    <property type="taxonomic scope" value="Eukaryota"/>
</dbReference>
<dbReference type="HOGENOM" id="CLU_015857_7_1_1"/>
<dbReference type="OrthoDB" id="7848262at2759"/>
<dbReference type="Proteomes" id="UP000002605">
    <property type="component" value="Chromosome 6"/>
</dbReference>
<dbReference type="GO" id="GO:0005737">
    <property type="term" value="C:cytoplasm"/>
    <property type="evidence" value="ECO:0007669"/>
    <property type="project" value="UniProtKB-SubCell"/>
</dbReference>
<dbReference type="GO" id="GO:0004239">
    <property type="term" value="F:initiator methionyl aminopeptidase activity"/>
    <property type="evidence" value="ECO:0007669"/>
    <property type="project" value="UniProtKB-UniRule"/>
</dbReference>
<dbReference type="GO" id="GO:0046872">
    <property type="term" value="F:metal ion binding"/>
    <property type="evidence" value="ECO:0007669"/>
    <property type="project" value="UniProtKB-UniRule"/>
</dbReference>
<dbReference type="GO" id="GO:0070006">
    <property type="term" value="F:metalloaminopeptidase activity"/>
    <property type="evidence" value="ECO:0007669"/>
    <property type="project" value="UniProtKB-UniRule"/>
</dbReference>
<dbReference type="GO" id="GO:0006508">
    <property type="term" value="P:proteolysis"/>
    <property type="evidence" value="ECO:0007669"/>
    <property type="project" value="UniProtKB-KW"/>
</dbReference>
<dbReference type="CDD" id="cd01088">
    <property type="entry name" value="MetAP2"/>
    <property type="match status" value="1"/>
</dbReference>
<dbReference type="Gene3D" id="3.90.230.10">
    <property type="entry name" value="Creatinase/methionine aminopeptidase superfamily"/>
    <property type="match status" value="1"/>
</dbReference>
<dbReference type="Gene3D" id="1.10.10.10">
    <property type="entry name" value="Winged helix-like DNA-binding domain superfamily/Winged helix DNA-binding domain"/>
    <property type="match status" value="1"/>
</dbReference>
<dbReference type="HAMAP" id="MF_03175">
    <property type="entry name" value="MetAP_2_euk"/>
    <property type="match status" value="1"/>
</dbReference>
<dbReference type="InterPro" id="IPR036005">
    <property type="entry name" value="Creatinase/aminopeptidase-like"/>
</dbReference>
<dbReference type="InterPro" id="IPR050247">
    <property type="entry name" value="Met_Aminopeptidase_Type2"/>
</dbReference>
<dbReference type="InterPro" id="IPR000994">
    <property type="entry name" value="Pept_M24"/>
</dbReference>
<dbReference type="InterPro" id="IPR001714">
    <property type="entry name" value="Pept_M24_MAP"/>
</dbReference>
<dbReference type="InterPro" id="IPR002468">
    <property type="entry name" value="Pept_M24A_MAP2"/>
</dbReference>
<dbReference type="InterPro" id="IPR018349">
    <property type="entry name" value="Pept_M24A_MAP2_BS"/>
</dbReference>
<dbReference type="InterPro" id="IPR036388">
    <property type="entry name" value="WH-like_DNA-bd_sf"/>
</dbReference>
<dbReference type="InterPro" id="IPR036390">
    <property type="entry name" value="WH_DNA-bd_sf"/>
</dbReference>
<dbReference type="NCBIfam" id="TIGR00501">
    <property type="entry name" value="met_pdase_II"/>
    <property type="match status" value="1"/>
</dbReference>
<dbReference type="PANTHER" id="PTHR45777">
    <property type="entry name" value="METHIONINE AMINOPEPTIDASE 2"/>
    <property type="match status" value="1"/>
</dbReference>
<dbReference type="PANTHER" id="PTHR45777:SF2">
    <property type="entry name" value="METHIONINE AMINOPEPTIDASE 2"/>
    <property type="match status" value="1"/>
</dbReference>
<dbReference type="Pfam" id="PF00557">
    <property type="entry name" value="Peptidase_M24"/>
    <property type="match status" value="1"/>
</dbReference>
<dbReference type="PRINTS" id="PR00599">
    <property type="entry name" value="MAPEPTIDASE"/>
</dbReference>
<dbReference type="SUPFAM" id="SSF55920">
    <property type="entry name" value="Creatinase/aminopeptidase"/>
    <property type="match status" value="1"/>
</dbReference>
<dbReference type="SUPFAM" id="SSF46785">
    <property type="entry name" value="Winged helix' DNA-binding domain"/>
    <property type="match status" value="1"/>
</dbReference>
<dbReference type="PROSITE" id="PS01202">
    <property type="entry name" value="MAP_2"/>
    <property type="match status" value="1"/>
</dbReference>
<sequence>MTGVTGTEDTKVIESKINELNIDKSKPEKTNKVNKSDDVDNDDVDNDDNDDEDNDDDDDEITESGNSASSSGDKKKKKNKNKNKKKKKKKIISIDSSYPEGIFPEGQWMEYPLEDINSYRITSEEKRYLDRQQNNKWQDFRKGAEIHRRVRHKAQSSIKPGMTMIEIANLIEDSIRNYSNNDHTLKSGIGFPTGLSLNHVAAHYTPNTGDKLILKKDDIMKVDIGIHVNGRICDSAFTMTFNDEGKYDNIMKAVKEATYTGIKESGIDVRLNDIGAAIQEVMESYEMEENGKIYPIKCIKNLNGHNIDDFIIHSGKSVPIIANGDMTKMEEGEIFAIETFGSTGNGYVLPEGECSHYAMNKNIQHLKPPSERSKQLLESIKQNFGTLPWCRRYLERTGEEKYLFALNQLVRHGIIEEYPPIVDKRGSYTAQYEHTILLHPHKKEVVTKGDDY</sequence>
<name>MAP2_CANDC</name>
<protein>
    <recommendedName>
        <fullName evidence="1">Methionine aminopeptidase 2</fullName>
        <shortName evidence="1">MAP 2</shortName>
        <shortName evidence="1">MetAP 2</shortName>
        <ecNumber evidence="1">3.4.11.18</ecNumber>
    </recommendedName>
    <alternativeName>
        <fullName evidence="1">Peptidase M</fullName>
    </alternativeName>
</protein>
<evidence type="ECO:0000255" key="1">
    <source>
        <dbReference type="HAMAP-Rule" id="MF_03175"/>
    </source>
</evidence>
<evidence type="ECO:0000256" key="2">
    <source>
        <dbReference type="SAM" id="MobiDB-lite"/>
    </source>
</evidence>